<protein>
    <recommendedName>
        <fullName>Kelch repeat and BTB domain-containing protein F47D12.7</fullName>
    </recommendedName>
</protein>
<keyword id="KW-0880">Kelch repeat</keyword>
<keyword id="KW-1185">Reference proteome</keyword>
<keyword id="KW-0677">Repeat</keyword>
<organism>
    <name type="scientific">Caenorhabditis elegans</name>
    <dbReference type="NCBI Taxonomy" id="6239"/>
    <lineage>
        <taxon>Eukaryota</taxon>
        <taxon>Metazoa</taxon>
        <taxon>Ecdysozoa</taxon>
        <taxon>Nematoda</taxon>
        <taxon>Chromadorea</taxon>
        <taxon>Rhabditida</taxon>
        <taxon>Rhabditina</taxon>
        <taxon>Rhabditomorpha</taxon>
        <taxon>Rhabditoidea</taxon>
        <taxon>Rhabditidae</taxon>
        <taxon>Peloderinae</taxon>
        <taxon>Caenorhabditis</taxon>
    </lineage>
</organism>
<proteinExistence type="predicted"/>
<evidence type="ECO:0000255" key="1">
    <source>
        <dbReference type="PROSITE-ProRule" id="PRU00037"/>
    </source>
</evidence>
<dbReference type="EMBL" id="FO080618">
    <property type="protein sequence ID" value="CCD83376.1"/>
    <property type="molecule type" value="Genomic_DNA"/>
</dbReference>
<dbReference type="PIR" id="H88478">
    <property type="entry name" value="H88478"/>
</dbReference>
<dbReference type="RefSeq" id="NP_498380.1">
    <property type="nucleotide sequence ID" value="NM_065979.4"/>
</dbReference>
<dbReference type="SMR" id="Q09563"/>
<dbReference type="FunCoup" id="Q09563">
    <property type="interactions" value="486"/>
</dbReference>
<dbReference type="STRING" id="6239.F47D12.7.1"/>
<dbReference type="PaxDb" id="6239-F47D12.7"/>
<dbReference type="EnsemblMetazoa" id="F47D12.7.1">
    <property type="protein sequence ID" value="F47D12.7.1"/>
    <property type="gene ID" value="WBGene00018563"/>
</dbReference>
<dbReference type="GeneID" id="175891"/>
<dbReference type="KEGG" id="cel:CELE_F47D12.7"/>
<dbReference type="UCSC" id="F47D12.7">
    <property type="organism name" value="c. elegans"/>
</dbReference>
<dbReference type="AGR" id="WB:WBGene00018563"/>
<dbReference type="CTD" id="175891"/>
<dbReference type="WormBase" id="F47D12.7">
    <property type="protein sequence ID" value="CE01951"/>
    <property type="gene ID" value="WBGene00018563"/>
</dbReference>
<dbReference type="eggNOG" id="KOG4441">
    <property type="taxonomic scope" value="Eukaryota"/>
</dbReference>
<dbReference type="GeneTree" id="ENSGT00940000154664"/>
<dbReference type="HOGENOM" id="CLU_468724_0_0_1"/>
<dbReference type="InParanoid" id="Q09563"/>
<dbReference type="OrthoDB" id="5803581at2759"/>
<dbReference type="PhylomeDB" id="Q09563"/>
<dbReference type="PRO" id="PR:Q09563"/>
<dbReference type="Proteomes" id="UP000001940">
    <property type="component" value="Chromosome III"/>
</dbReference>
<dbReference type="Bgee" id="WBGene00018563">
    <property type="expression patterns" value="Expressed in adult organism and 2 other cell types or tissues"/>
</dbReference>
<dbReference type="GO" id="GO:0031463">
    <property type="term" value="C:Cul3-RING ubiquitin ligase complex"/>
    <property type="evidence" value="ECO:0000318"/>
    <property type="project" value="GO_Central"/>
</dbReference>
<dbReference type="GO" id="GO:0005737">
    <property type="term" value="C:cytoplasm"/>
    <property type="evidence" value="ECO:0000318"/>
    <property type="project" value="GO_Central"/>
</dbReference>
<dbReference type="GO" id="GO:1990756">
    <property type="term" value="F:ubiquitin-like ligase-substrate adaptor activity"/>
    <property type="evidence" value="ECO:0000318"/>
    <property type="project" value="GO_Central"/>
</dbReference>
<dbReference type="GO" id="GO:0043161">
    <property type="term" value="P:proteasome-mediated ubiquitin-dependent protein catabolic process"/>
    <property type="evidence" value="ECO:0000318"/>
    <property type="project" value="GO_Central"/>
</dbReference>
<dbReference type="Gene3D" id="1.25.40.420">
    <property type="match status" value="1"/>
</dbReference>
<dbReference type="Gene3D" id="2.120.10.80">
    <property type="entry name" value="Kelch-type beta propeller"/>
    <property type="match status" value="2"/>
</dbReference>
<dbReference type="Gene3D" id="3.30.710.10">
    <property type="entry name" value="Potassium Channel Kv1.1, Chain A"/>
    <property type="match status" value="1"/>
</dbReference>
<dbReference type="InterPro" id="IPR011705">
    <property type="entry name" value="BACK"/>
</dbReference>
<dbReference type="InterPro" id="IPR017096">
    <property type="entry name" value="BTB-kelch_protein"/>
</dbReference>
<dbReference type="InterPro" id="IPR000210">
    <property type="entry name" value="BTB/POZ_dom"/>
</dbReference>
<dbReference type="InterPro" id="IPR015915">
    <property type="entry name" value="Kelch-typ_b-propeller"/>
</dbReference>
<dbReference type="InterPro" id="IPR006652">
    <property type="entry name" value="Kelch_1"/>
</dbReference>
<dbReference type="InterPro" id="IPR011333">
    <property type="entry name" value="SKP1/BTB/POZ_sf"/>
</dbReference>
<dbReference type="PANTHER" id="PTHR45632:SF3">
    <property type="entry name" value="KELCH-LIKE PROTEIN 32"/>
    <property type="match status" value="1"/>
</dbReference>
<dbReference type="PANTHER" id="PTHR45632">
    <property type="entry name" value="LD33804P"/>
    <property type="match status" value="1"/>
</dbReference>
<dbReference type="Pfam" id="PF07707">
    <property type="entry name" value="BACK"/>
    <property type="match status" value="1"/>
</dbReference>
<dbReference type="Pfam" id="PF00651">
    <property type="entry name" value="BTB"/>
    <property type="match status" value="1"/>
</dbReference>
<dbReference type="Pfam" id="PF01344">
    <property type="entry name" value="Kelch_1"/>
    <property type="match status" value="2"/>
</dbReference>
<dbReference type="Pfam" id="PF24681">
    <property type="entry name" value="Kelch_KLHDC2_KLHL20_DRC7"/>
    <property type="match status" value="1"/>
</dbReference>
<dbReference type="PIRSF" id="PIRSF037037">
    <property type="entry name" value="Kelch-like_protein_gigaxonin"/>
    <property type="match status" value="1"/>
</dbReference>
<dbReference type="PRINTS" id="PR00501">
    <property type="entry name" value="KELCHREPEAT"/>
</dbReference>
<dbReference type="SMART" id="SM00875">
    <property type="entry name" value="BACK"/>
    <property type="match status" value="1"/>
</dbReference>
<dbReference type="SMART" id="SM00225">
    <property type="entry name" value="BTB"/>
    <property type="match status" value="1"/>
</dbReference>
<dbReference type="SMART" id="SM00612">
    <property type="entry name" value="Kelch"/>
    <property type="match status" value="5"/>
</dbReference>
<dbReference type="SUPFAM" id="SSF117281">
    <property type="entry name" value="Kelch motif"/>
    <property type="match status" value="1"/>
</dbReference>
<dbReference type="SUPFAM" id="SSF54695">
    <property type="entry name" value="POZ domain"/>
    <property type="match status" value="1"/>
</dbReference>
<dbReference type="PROSITE" id="PS50097">
    <property type="entry name" value="BTB"/>
    <property type="match status" value="1"/>
</dbReference>
<gene>
    <name type="ORF">F47D12.7</name>
</gene>
<sequence>MDICDISASQLATSPPPRTAIDFNSSIEESPVKRVKFSPELTKSFEETLSPTVTLVLRNNEEVIFDRYLLSFYSNYFRVLFSSKFRDSNSTTHRIRLISASDLHFLLTIPKAFEQGIKPNITLQKAIELLEPAAFLQMSIALDYISDIICKNLTHENIIKIFRLALLYHTTLAVRVWRSMVRKFQTLFATNVYLSLKENELIGLLTDKHLNLKSEDETTVVVNWIKHNSPLQSDRLTQFAQRNFSRRPQPDATKYEVIRTRQPMDAIVCFGGWASRGVAQKIEVCNTRSDRWQTCNFNYDIPNIHRAYHGIEVVEDKLIVYGGFDGIKQFQTTVLFDLSTKEWRRGANMNDKRCYVTSARVNDSYGRPLVFACGGMNGVSRLKTAEMYDYRADQWTEVANMTQMRSDGAVVTIDNKIVAIGGFDGRNIHQGGEVYDPVLDLWHPLSSNMRTRRTGCTAVSIMNQVCMIIGGFNGNRRLDSAEIYDMREGLWHPEPTLQTARSNFSACQMDTCYVYVAGGFDGQTTTKESERLDLRSKMWQALPDMAEAKSALRMVTLSDHPFLDELFDIPDDTGIVTSW</sequence>
<name>YR47_CAEEL</name>
<feature type="chain" id="PRO_0000119147" description="Kelch repeat and BTB domain-containing protein F47D12.7">
    <location>
        <begin position="1"/>
        <end position="579"/>
    </location>
</feature>
<feature type="domain" description="BTB" evidence="1">
    <location>
        <begin position="51"/>
        <end position="119"/>
    </location>
</feature>
<feature type="repeat" description="Kelch 1">
    <location>
        <begin position="266"/>
        <end position="316"/>
    </location>
</feature>
<feature type="repeat" description="Kelch 2">
    <location>
        <begin position="317"/>
        <end position="363"/>
    </location>
</feature>
<feature type="repeat" description="Kelch 3">
    <location>
        <begin position="369"/>
        <end position="415"/>
    </location>
</feature>
<feature type="repeat" description="Kelch 4">
    <location>
        <begin position="417"/>
        <end position="463"/>
    </location>
</feature>
<feature type="repeat" description="Kelch 5">
    <location>
        <begin position="465"/>
        <end position="511"/>
    </location>
</feature>
<feature type="repeat" description="Kelch 6">
    <location>
        <begin position="513"/>
        <end position="559"/>
    </location>
</feature>
<reference key="1">
    <citation type="journal article" date="1998" name="Science">
        <title>Genome sequence of the nematode C. elegans: a platform for investigating biology.</title>
        <authorList>
            <consortium name="The C. elegans sequencing consortium"/>
        </authorList>
    </citation>
    <scope>NUCLEOTIDE SEQUENCE [LARGE SCALE GENOMIC DNA]</scope>
    <source>
        <strain>Bristol N2</strain>
    </source>
</reference>
<accession>Q09563</accession>